<comment type="similarity">
    <text evidence="1">Belongs to the UPF0597 family.</text>
</comment>
<accession>B5YS00</accession>
<protein>
    <recommendedName>
        <fullName evidence="1">UPF0597 protein YhaM</fullName>
    </recommendedName>
</protein>
<reference key="1">
    <citation type="journal article" date="2011" name="Proc. Natl. Acad. Sci. U.S.A.">
        <title>Genomic anatomy of Escherichia coli O157:H7 outbreaks.</title>
        <authorList>
            <person name="Eppinger M."/>
            <person name="Mammel M.K."/>
            <person name="Leclerc J.E."/>
            <person name="Ravel J."/>
            <person name="Cebula T.A."/>
        </authorList>
    </citation>
    <scope>NUCLEOTIDE SEQUENCE [LARGE SCALE GENOMIC DNA]</scope>
    <source>
        <strain>EC4115 / EHEC</strain>
    </source>
</reference>
<dbReference type="EMBL" id="CP001164">
    <property type="protein sequence ID" value="ACI38354.1"/>
    <property type="molecule type" value="Genomic_DNA"/>
</dbReference>
<dbReference type="SMR" id="B5YS00"/>
<dbReference type="KEGG" id="ecf:ECH74115_4423"/>
<dbReference type="HOGENOM" id="CLU_051840_0_0_6"/>
<dbReference type="GO" id="GO:0080146">
    <property type="term" value="F:L-cysteine desulfhydrase activity"/>
    <property type="evidence" value="ECO:0007669"/>
    <property type="project" value="TreeGrafter"/>
</dbReference>
<dbReference type="GO" id="GO:0019450">
    <property type="term" value="P:L-cysteine catabolic process to pyruvate"/>
    <property type="evidence" value="ECO:0007669"/>
    <property type="project" value="TreeGrafter"/>
</dbReference>
<dbReference type="HAMAP" id="MF_01845">
    <property type="entry name" value="UPF0597"/>
    <property type="match status" value="1"/>
</dbReference>
<dbReference type="InterPro" id="IPR005130">
    <property type="entry name" value="Ser_deHydtase-like_asu"/>
</dbReference>
<dbReference type="InterPro" id="IPR021144">
    <property type="entry name" value="UPF0597"/>
</dbReference>
<dbReference type="PANTHER" id="PTHR30501">
    <property type="entry name" value="UPF0597 PROTEIN YHAM"/>
    <property type="match status" value="1"/>
</dbReference>
<dbReference type="PANTHER" id="PTHR30501:SF2">
    <property type="entry name" value="UPF0597 PROTEIN YHAM"/>
    <property type="match status" value="1"/>
</dbReference>
<dbReference type="Pfam" id="PF03313">
    <property type="entry name" value="SDH_alpha"/>
    <property type="match status" value="1"/>
</dbReference>
<dbReference type="PIRSF" id="PIRSF006054">
    <property type="entry name" value="UCP006054"/>
    <property type="match status" value="1"/>
</dbReference>
<organism>
    <name type="scientific">Escherichia coli O157:H7 (strain EC4115 / EHEC)</name>
    <dbReference type="NCBI Taxonomy" id="444450"/>
    <lineage>
        <taxon>Bacteria</taxon>
        <taxon>Pseudomonadati</taxon>
        <taxon>Pseudomonadota</taxon>
        <taxon>Gammaproteobacteria</taxon>
        <taxon>Enterobacterales</taxon>
        <taxon>Enterobacteriaceae</taxon>
        <taxon>Escherichia</taxon>
    </lineage>
</organism>
<gene>
    <name evidence="1" type="primary">yhaM</name>
    <name type="ordered locus">ECH74115_4423</name>
</gene>
<proteinExistence type="inferred from homology"/>
<sequence>MFDSTLNPLWQRYILAVQEEVKPALGCTEPISLALAAAVAAAELEGPVERVEAWVSPNLMKNGLGVTVPGTGMVGLPIAAALGALGGNANAGLEVLKDATAQAIADAKALLAAGKVSVKIQEPCNEILFSRAKVWNGEKWACVTIVGGHTNIVHIETHDGVVFTQQACVAEGEQESPLSVLSRTTLAEILKFVNEVPFAAIRFILDSAKLNCALSQEGLSGKWGLHIGATLEKQCERGLLAKDLSSSIVIRTSAASDARMGGATLPAMSNSGSGNQGITATMPVVVVAEHFGADDERLARALMLSHLSAIYIHNQLPRLSALCAATTAAMGAAAGMAWLVDGRYETISMAISSMIGDVSGMICDGASNSCAMKVSTSASAAWKAVLMALDDTAVTGNEGIVAHDVEQSIANLCALASHSMQQTDRQIIEIMASKAR</sequence>
<name>YHAM_ECO5E</name>
<feature type="chain" id="PRO_1000188453" description="UPF0597 protein YhaM">
    <location>
        <begin position="1"/>
        <end position="436"/>
    </location>
</feature>
<evidence type="ECO:0000255" key="1">
    <source>
        <dbReference type="HAMAP-Rule" id="MF_01845"/>
    </source>
</evidence>